<accession>Q87A22</accession>
<evidence type="ECO:0000255" key="1">
    <source>
        <dbReference type="HAMAP-Rule" id="MF_00583"/>
    </source>
</evidence>
<gene>
    <name evidence="1" type="primary">prs</name>
    <name type="synonym">prsA</name>
    <name type="ordered locus">PD_2016</name>
</gene>
<reference key="1">
    <citation type="journal article" date="2003" name="J. Bacteriol.">
        <title>Comparative analyses of the complete genome sequences of Pierce's disease and citrus variegated chlorosis strains of Xylella fastidiosa.</title>
        <authorList>
            <person name="Van Sluys M.A."/>
            <person name="de Oliveira M.C."/>
            <person name="Monteiro-Vitorello C.B."/>
            <person name="Miyaki C.Y."/>
            <person name="Furlan L.R."/>
            <person name="Camargo L.E.A."/>
            <person name="da Silva A.C.R."/>
            <person name="Moon D.H."/>
            <person name="Takita M.A."/>
            <person name="Lemos E.G.M."/>
            <person name="Machado M.A."/>
            <person name="Ferro M.I.T."/>
            <person name="da Silva F.R."/>
            <person name="Goldman M.H.S."/>
            <person name="Goldman G.H."/>
            <person name="Lemos M.V.F."/>
            <person name="El-Dorry H."/>
            <person name="Tsai S.M."/>
            <person name="Carrer H."/>
            <person name="Carraro D.M."/>
            <person name="de Oliveira R.C."/>
            <person name="Nunes L.R."/>
            <person name="Siqueira W.J."/>
            <person name="Coutinho L.L."/>
            <person name="Kimura E.T."/>
            <person name="Ferro E.S."/>
            <person name="Harakava R."/>
            <person name="Kuramae E.E."/>
            <person name="Marino C.L."/>
            <person name="Giglioti E."/>
            <person name="Abreu I.L."/>
            <person name="Alves L.M.C."/>
            <person name="do Amaral A.M."/>
            <person name="Baia G.S."/>
            <person name="Blanco S.R."/>
            <person name="Brito M.S."/>
            <person name="Cannavan F.S."/>
            <person name="Celestino A.V."/>
            <person name="da Cunha A.F."/>
            <person name="Fenille R.C."/>
            <person name="Ferro J.A."/>
            <person name="Formighieri E.F."/>
            <person name="Kishi L.T."/>
            <person name="Leoni S.G."/>
            <person name="Oliveira A.R."/>
            <person name="Rosa V.E. Jr."/>
            <person name="Sassaki F.T."/>
            <person name="Sena J.A.D."/>
            <person name="de Souza A.A."/>
            <person name="Truffi D."/>
            <person name="Tsukumo F."/>
            <person name="Yanai G.M."/>
            <person name="Zaros L.G."/>
            <person name="Civerolo E.L."/>
            <person name="Simpson A.J.G."/>
            <person name="Almeida N.F. Jr."/>
            <person name="Setubal J.C."/>
            <person name="Kitajima J.P."/>
        </authorList>
    </citation>
    <scope>NUCLEOTIDE SEQUENCE [LARGE SCALE GENOMIC DNA]</scope>
    <source>
        <strain>Temecula1 / ATCC 700964</strain>
    </source>
</reference>
<comment type="function">
    <text evidence="1">Involved in the biosynthesis of the central metabolite phospho-alpha-D-ribosyl-1-pyrophosphate (PRPP) via the transfer of pyrophosphoryl group from ATP to 1-hydroxyl of ribose-5-phosphate (Rib-5-P).</text>
</comment>
<comment type="catalytic activity">
    <reaction evidence="1">
        <text>D-ribose 5-phosphate + ATP = 5-phospho-alpha-D-ribose 1-diphosphate + AMP + H(+)</text>
        <dbReference type="Rhea" id="RHEA:15609"/>
        <dbReference type="ChEBI" id="CHEBI:15378"/>
        <dbReference type="ChEBI" id="CHEBI:30616"/>
        <dbReference type="ChEBI" id="CHEBI:58017"/>
        <dbReference type="ChEBI" id="CHEBI:78346"/>
        <dbReference type="ChEBI" id="CHEBI:456215"/>
        <dbReference type="EC" id="2.7.6.1"/>
    </reaction>
</comment>
<comment type="cofactor">
    <cofactor evidence="1">
        <name>Mg(2+)</name>
        <dbReference type="ChEBI" id="CHEBI:18420"/>
    </cofactor>
    <text evidence="1">Binds 2 Mg(2+) ions per subunit.</text>
</comment>
<comment type="pathway">
    <text evidence="1">Metabolic intermediate biosynthesis; 5-phospho-alpha-D-ribose 1-diphosphate biosynthesis; 5-phospho-alpha-D-ribose 1-diphosphate from D-ribose 5-phosphate (route I): step 1/1.</text>
</comment>
<comment type="subunit">
    <text evidence="1">Homohexamer.</text>
</comment>
<comment type="subcellular location">
    <subcellularLocation>
        <location evidence="1">Cytoplasm</location>
    </subcellularLocation>
</comment>
<comment type="similarity">
    <text evidence="1">Belongs to the ribose-phosphate pyrophosphokinase family. Class I subfamily.</text>
</comment>
<feature type="chain" id="PRO_0000141230" description="Ribose-phosphate pyrophosphokinase">
    <location>
        <begin position="1"/>
        <end position="322"/>
    </location>
</feature>
<feature type="active site" evidence="1">
    <location>
        <position position="201"/>
    </location>
</feature>
<feature type="binding site" evidence="1">
    <location>
        <begin position="43"/>
        <end position="45"/>
    </location>
    <ligand>
        <name>ATP</name>
        <dbReference type="ChEBI" id="CHEBI:30616"/>
    </ligand>
</feature>
<feature type="binding site" evidence="1">
    <location>
        <begin position="102"/>
        <end position="103"/>
    </location>
    <ligand>
        <name>ATP</name>
        <dbReference type="ChEBI" id="CHEBI:30616"/>
    </ligand>
</feature>
<feature type="binding site" evidence="1">
    <location>
        <position position="137"/>
    </location>
    <ligand>
        <name>Mg(2+)</name>
        <dbReference type="ChEBI" id="CHEBI:18420"/>
        <label>1</label>
    </ligand>
</feature>
<feature type="binding site" evidence="1">
    <location>
        <position position="177"/>
    </location>
    <ligand>
        <name>Mg(2+)</name>
        <dbReference type="ChEBI" id="CHEBI:18420"/>
        <label>2</label>
    </ligand>
</feature>
<feature type="binding site" evidence="1">
    <location>
        <position position="203"/>
    </location>
    <ligand>
        <name>D-ribose 5-phosphate</name>
        <dbReference type="ChEBI" id="CHEBI:78346"/>
    </ligand>
</feature>
<feature type="binding site" evidence="1">
    <location>
        <position position="227"/>
    </location>
    <ligand>
        <name>D-ribose 5-phosphate</name>
        <dbReference type="ChEBI" id="CHEBI:78346"/>
    </ligand>
</feature>
<feature type="binding site" evidence="1">
    <location>
        <begin position="231"/>
        <end position="235"/>
    </location>
    <ligand>
        <name>D-ribose 5-phosphate</name>
        <dbReference type="ChEBI" id="CHEBI:78346"/>
    </ligand>
</feature>
<protein>
    <recommendedName>
        <fullName evidence="1">Ribose-phosphate pyrophosphokinase</fullName>
        <shortName evidence="1">RPPK</shortName>
        <ecNumber evidence="1">2.7.6.1</ecNumber>
    </recommendedName>
    <alternativeName>
        <fullName evidence="1">5-phospho-D-ribosyl alpha-1-diphosphate synthase</fullName>
    </alternativeName>
    <alternativeName>
        <fullName evidence="1">Phosphoribosyl diphosphate synthase</fullName>
    </alternativeName>
    <alternativeName>
        <fullName evidence="1">Phosphoribosyl pyrophosphate synthase</fullName>
        <shortName evidence="1">P-Rib-PP synthase</shortName>
        <shortName evidence="1">PRPP synthase</shortName>
        <shortName evidence="1">PRPPase</shortName>
    </alternativeName>
</protein>
<organism>
    <name type="scientific">Xylella fastidiosa (strain Temecula1 / ATCC 700964)</name>
    <dbReference type="NCBI Taxonomy" id="183190"/>
    <lineage>
        <taxon>Bacteria</taxon>
        <taxon>Pseudomonadati</taxon>
        <taxon>Pseudomonadota</taxon>
        <taxon>Gammaproteobacteria</taxon>
        <taxon>Lysobacterales</taxon>
        <taxon>Lysobacteraceae</taxon>
        <taxon>Xylella</taxon>
    </lineage>
</organism>
<dbReference type="EC" id="2.7.6.1" evidence="1"/>
<dbReference type="EMBL" id="AE009442">
    <property type="protein sequence ID" value="AAO29841.1"/>
    <property type="molecule type" value="Genomic_DNA"/>
</dbReference>
<dbReference type="SMR" id="Q87A22"/>
<dbReference type="KEGG" id="xft:PD_2016"/>
<dbReference type="HOGENOM" id="CLU_033546_2_0_6"/>
<dbReference type="UniPathway" id="UPA00087">
    <property type="reaction ID" value="UER00172"/>
</dbReference>
<dbReference type="Proteomes" id="UP000002516">
    <property type="component" value="Chromosome"/>
</dbReference>
<dbReference type="GO" id="GO:0005737">
    <property type="term" value="C:cytoplasm"/>
    <property type="evidence" value="ECO:0007669"/>
    <property type="project" value="UniProtKB-SubCell"/>
</dbReference>
<dbReference type="GO" id="GO:0002189">
    <property type="term" value="C:ribose phosphate diphosphokinase complex"/>
    <property type="evidence" value="ECO:0007669"/>
    <property type="project" value="TreeGrafter"/>
</dbReference>
<dbReference type="GO" id="GO:0005524">
    <property type="term" value="F:ATP binding"/>
    <property type="evidence" value="ECO:0007669"/>
    <property type="project" value="UniProtKB-KW"/>
</dbReference>
<dbReference type="GO" id="GO:0016301">
    <property type="term" value="F:kinase activity"/>
    <property type="evidence" value="ECO:0007669"/>
    <property type="project" value="UniProtKB-KW"/>
</dbReference>
<dbReference type="GO" id="GO:0000287">
    <property type="term" value="F:magnesium ion binding"/>
    <property type="evidence" value="ECO:0007669"/>
    <property type="project" value="UniProtKB-UniRule"/>
</dbReference>
<dbReference type="GO" id="GO:0004749">
    <property type="term" value="F:ribose phosphate diphosphokinase activity"/>
    <property type="evidence" value="ECO:0007669"/>
    <property type="project" value="UniProtKB-UniRule"/>
</dbReference>
<dbReference type="GO" id="GO:0006015">
    <property type="term" value="P:5-phosphoribose 1-diphosphate biosynthetic process"/>
    <property type="evidence" value="ECO:0007669"/>
    <property type="project" value="UniProtKB-UniRule"/>
</dbReference>
<dbReference type="GO" id="GO:0006164">
    <property type="term" value="P:purine nucleotide biosynthetic process"/>
    <property type="evidence" value="ECO:0007669"/>
    <property type="project" value="TreeGrafter"/>
</dbReference>
<dbReference type="GO" id="GO:0009156">
    <property type="term" value="P:ribonucleoside monophosphate biosynthetic process"/>
    <property type="evidence" value="ECO:0007669"/>
    <property type="project" value="InterPro"/>
</dbReference>
<dbReference type="CDD" id="cd06223">
    <property type="entry name" value="PRTases_typeI"/>
    <property type="match status" value="1"/>
</dbReference>
<dbReference type="FunFam" id="3.40.50.2020:FF:000001">
    <property type="entry name" value="Ribose-phosphate pyrophosphokinase"/>
    <property type="match status" value="1"/>
</dbReference>
<dbReference type="Gene3D" id="3.40.50.2020">
    <property type="match status" value="2"/>
</dbReference>
<dbReference type="HAMAP" id="MF_00583_B">
    <property type="entry name" value="RibP_PPkinase_B"/>
    <property type="match status" value="1"/>
</dbReference>
<dbReference type="InterPro" id="IPR000842">
    <property type="entry name" value="PRib_PP_synth_CS"/>
</dbReference>
<dbReference type="InterPro" id="IPR029099">
    <property type="entry name" value="Pribosyltran_N"/>
</dbReference>
<dbReference type="InterPro" id="IPR000836">
    <property type="entry name" value="PRibTrfase_dom"/>
</dbReference>
<dbReference type="InterPro" id="IPR029057">
    <property type="entry name" value="PRTase-like"/>
</dbReference>
<dbReference type="InterPro" id="IPR005946">
    <property type="entry name" value="Rib-P_diPkinase"/>
</dbReference>
<dbReference type="InterPro" id="IPR037515">
    <property type="entry name" value="Rib-P_diPkinase_bac"/>
</dbReference>
<dbReference type="NCBIfam" id="NF002320">
    <property type="entry name" value="PRK01259.1"/>
    <property type="match status" value="1"/>
</dbReference>
<dbReference type="NCBIfam" id="NF003428">
    <property type="entry name" value="PRK04923.1"/>
    <property type="match status" value="1"/>
</dbReference>
<dbReference type="NCBIfam" id="TIGR01251">
    <property type="entry name" value="ribP_PPkin"/>
    <property type="match status" value="1"/>
</dbReference>
<dbReference type="PANTHER" id="PTHR10210">
    <property type="entry name" value="RIBOSE-PHOSPHATE DIPHOSPHOKINASE FAMILY MEMBER"/>
    <property type="match status" value="1"/>
</dbReference>
<dbReference type="PANTHER" id="PTHR10210:SF41">
    <property type="entry name" value="RIBOSE-PHOSPHATE PYROPHOSPHOKINASE 1, CHLOROPLASTIC"/>
    <property type="match status" value="1"/>
</dbReference>
<dbReference type="Pfam" id="PF14572">
    <property type="entry name" value="Pribosyl_synth"/>
    <property type="match status" value="1"/>
</dbReference>
<dbReference type="Pfam" id="PF13793">
    <property type="entry name" value="Pribosyltran_N"/>
    <property type="match status" value="1"/>
</dbReference>
<dbReference type="SMART" id="SM01400">
    <property type="entry name" value="Pribosyltran_N"/>
    <property type="match status" value="1"/>
</dbReference>
<dbReference type="SUPFAM" id="SSF53271">
    <property type="entry name" value="PRTase-like"/>
    <property type="match status" value="1"/>
</dbReference>
<dbReference type="PROSITE" id="PS00114">
    <property type="entry name" value="PRPP_SYNTHASE"/>
    <property type="match status" value="1"/>
</dbReference>
<proteinExistence type="inferred from homology"/>
<sequence>MPTIQDERNLMVFSGNANKPLTQSICKELGVRMGKSLVSRFSDGEEQVEIEESVRRQEVFVVQPTCAPSAENLMELLVIIDALKRASVSSVTAVIPYFGYSRQDRRMRSLRVPITAKVAAKMISAIGADRVLTIDLHADQIQGFFDVPVDNVYASPLLLADIWRAYGTDNIIVVSPDVGGVVRARAMAKRLGDTDLAIIDKRRPRANVATVMNIIGEVNGKTCVLVDDLVDTAGTLCAAAVALKQNGATKVVAYITHPVLSGPAMDNINNSELDELVVTDTIPLSDAARECRKIRQLSVAELLAETIRRIAFGESVSSLYVD</sequence>
<name>KPRS_XYLFT</name>
<keyword id="KW-0067">ATP-binding</keyword>
<keyword id="KW-0963">Cytoplasm</keyword>
<keyword id="KW-0418">Kinase</keyword>
<keyword id="KW-0460">Magnesium</keyword>
<keyword id="KW-0479">Metal-binding</keyword>
<keyword id="KW-0545">Nucleotide biosynthesis</keyword>
<keyword id="KW-0547">Nucleotide-binding</keyword>
<keyword id="KW-1185">Reference proteome</keyword>
<keyword id="KW-0808">Transferase</keyword>